<sequence length="88" mass="9942">MAKGQSLQDPFLNALRRERIPVSIYLVNGIKLQGQIESFDQFVILLKNTVNQMVYKHAISTVVPARAVSHHSGEQQRAPSDRPEKTED</sequence>
<gene>
    <name evidence="1" type="primary">hfq</name>
    <name type="ordered locus">VS_0270</name>
</gene>
<dbReference type="EMBL" id="FM954972">
    <property type="protein sequence ID" value="CAV17292.1"/>
    <property type="molecule type" value="Genomic_DNA"/>
</dbReference>
<dbReference type="SMR" id="B7VI55"/>
<dbReference type="STRING" id="575788.VS_0270"/>
<dbReference type="KEGG" id="vsp:VS_0270"/>
<dbReference type="eggNOG" id="COG1923">
    <property type="taxonomic scope" value="Bacteria"/>
</dbReference>
<dbReference type="HOGENOM" id="CLU_113688_2_2_6"/>
<dbReference type="Proteomes" id="UP000009100">
    <property type="component" value="Chromosome 1"/>
</dbReference>
<dbReference type="GO" id="GO:0005829">
    <property type="term" value="C:cytosol"/>
    <property type="evidence" value="ECO:0007669"/>
    <property type="project" value="TreeGrafter"/>
</dbReference>
<dbReference type="GO" id="GO:0003723">
    <property type="term" value="F:RNA binding"/>
    <property type="evidence" value="ECO:0007669"/>
    <property type="project" value="UniProtKB-UniRule"/>
</dbReference>
<dbReference type="GO" id="GO:0006355">
    <property type="term" value="P:regulation of DNA-templated transcription"/>
    <property type="evidence" value="ECO:0007669"/>
    <property type="project" value="InterPro"/>
</dbReference>
<dbReference type="GO" id="GO:0043487">
    <property type="term" value="P:regulation of RNA stability"/>
    <property type="evidence" value="ECO:0007669"/>
    <property type="project" value="TreeGrafter"/>
</dbReference>
<dbReference type="GO" id="GO:0045974">
    <property type="term" value="P:regulation of translation, ncRNA-mediated"/>
    <property type="evidence" value="ECO:0007669"/>
    <property type="project" value="TreeGrafter"/>
</dbReference>
<dbReference type="CDD" id="cd01716">
    <property type="entry name" value="Hfq"/>
    <property type="match status" value="1"/>
</dbReference>
<dbReference type="FunFam" id="2.30.30.100:FF:000001">
    <property type="entry name" value="RNA-binding protein Hfq"/>
    <property type="match status" value="1"/>
</dbReference>
<dbReference type="Gene3D" id="2.30.30.100">
    <property type="match status" value="1"/>
</dbReference>
<dbReference type="HAMAP" id="MF_00436">
    <property type="entry name" value="Hfq"/>
    <property type="match status" value="1"/>
</dbReference>
<dbReference type="InterPro" id="IPR005001">
    <property type="entry name" value="Hfq"/>
</dbReference>
<dbReference type="InterPro" id="IPR010920">
    <property type="entry name" value="LSM_dom_sf"/>
</dbReference>
<dbReference type="InterPro" id="IPR047575">
    <property type="entry name" value="Sm"/>
</dbReference>
<dbReference type="NCBIfam" id="TIGR02383">
    <property type="entry name" value="Hfq"/>
    <property type="match status" value="1"/>
</dbReference>
<dbReference type="NCBIfam" id="NF001602">
    <property type="entry name" value="PRK00395.1"/>
    <property type="match status" value="1"/>
</dbReference>
<dbReference type="PANTHER" id="PTHR34772">
    <property type="entry name" value="RNA-BINDING PROTEIN HFQ"/>
    <property type="match status" value="1"/>
</dbReference>
<dbReference type="PANTHER" id="PTHR34772:SF1">
    <property type="entry name" value="RNA-BINDING PROTEIN HFQ"/>
    <property type="match status" value="1"/>
</dbReference>
<dbReference type="Pfam" id="PF17209">
    <property type="entry name" value="Hfq"/>
    <property type="match status" value="1"/>
</dbReference>
<dbReference type="SUPFAM" id="SSF50182">
    <property type="entry name" value="Sm-like ribonucleoproteins"/>
    <property type="match status" value="1"/>
</dbReference>
<dbReference type="PROSITE" id="PS52002">
    <property type="entry name" value="SM"/>
    <property type="match status" value="1"/>
</dbReference>
<name>HFQ_VIBA3</name>
<keyword id="KW-0694">RNA-binding</keyword>
<keyword id="KW-0346">Stress response</keyword>
<evidence type="ECO:0000255" key="1">
    <source>
        <dbReference type="HAMAP-Rule" id="MF_00436"/>
    </source>
</evidence>
<evidence type="ECO:0000255" key="2">
    <source>
        <dbReference type="PROSITE-ProRule" id="PRU01346"/>
    </source>
</evidence>
<evidence type="ECO:0000256" key="3">
    <source>
        <dbReference type="SAM" id="MobiDB-lite"/>
    </source>
</evidence>
<feature type="chain" id="PRO_1000135045" description="RNA-binding protein Hfq">
    <location>
        <begin position="1"/>
        <end position="88"/>
    </location>
</feature>
<feature type="domain" description="Sm" evidence="2">
    <location>
        <begin position="9"/>
        <end position="68"/>
    </location>
</feature>
<feature type="region of interest" description="Disordered" evidence="3">
    <location>
        <begin position="66"/>
        <end position="88"/>
    </location>
</feature>
<feature type="compositionally biased region" description="Basic and acidic residues" evidence="3">
    <location>
        <begin position="71"/>
        <end position="88"/>
    </location>
</feature>
<protein>
    <recommendedName>
        <fullName evidence="1">RNA-binding protein Hfq</fullName>
    </recommendedName>
</protein>
<reference key="1">
    <citation type="submission" date="2009-02" db="EMBL/GenBank/DDBJ databases">
        <title>Vibrio splendidus str. LGP32 complete genome.</title>
        <authorList>
            <person name="Mazel D."/>
            <person name="Le Roux F."/>
        </authorList>
    </citation>
    <scope>NUCLEOTIDE SEQUENCE [LARGE SCALE GENOMIC DNA]</scope>
    <source>
        <strain>LGP32</strain>
    </source>
</reference>
<organism>
    <name type="scientific">Vibrio atlanticus (strain LGP32)</name>
    <name type="common">Vibrio splendidus (strain Mel32)</name>
    <dbReference type="NCBI Taxonomy" id="575788"/>
    <lineage>
        <taxon>Bacteria</taxon>
        <taxon>Pseudomonadati</taxon>
        <taxon>Pseudomonadota</taxon>
        <taxon>Gammaproteobacteria</taxon>
        <taxon>Vibrionales</taxon>
        <taxon>Vibrionaceae</taxon>
        <taxon>Vibrio</taxon>
    </lineage>
</organism>
<proteinExistence type="inferred from homology"/>
<accession>B7VI55</accession>
<comment type="function">
    <text evidence="1">RNA chaperone that binds small regulatory RNA (sRNAs) and mRNAs to facilitate mRNA translational regulation in response to envelope stress, environmental stress and changes in metabolite concentrations. Also binds with high specificity to tRNAs.</text>
</comment>
<comment type="subunit">
    <text evidence="1">Homohexamer.</text>
</comment>
<comment type="similarity">
    <text evidence="1">Belongs to the Hfq family.</text>
</comment>